<name>CARB_CLOBL</name>
<accession>A7GE89</accession>
<comment type="function">
    <text evidence="1">Large subunit of the glutamine-dependent carbamoyl phosphate synthetase (CPSase). CPSase catalyzes the formation of carbamoyl phosphate from the ammonia moiety of glutamine, carbonate, and phosphate donated by ATP, constituting the first step of 2 biosynthetic pathways, one leading to arginine and/or urea and the other to pyrimidine nucleotides. The large subunit (synthetase) binds the substrates ammonia (free or transferred from glutamine from the small subunit), hydrogencarbonate and ATP and carries out an ATP-coupled ligase reaction, activating hydrogencarbonate by forming carboxy phosphate which reacts with ammonia to form carbamoyl phosphate.</text>
</comment>
<comment type="catalytic activity">
    <reaction evidence="1">
        <text>hydrogencarbonate + L-glutamine + 2 ATP + H2O = carbamoyl phosphate + L-glutamate + 2 ADP + phosphate + 2 H(+)</text>
        <dbReference type="Rhea" id="RHEA:18633"/>
        <dbReference type="ChEBI" id="CHEBI:15377"/>
        <dbReference type="ChEBI" id="CHEBI:15378"/>
        <dbReference type="ChEBI" id="CHEBI:17544"/>
        <dbReference type="ChEBI" id="CHEBI:29985"/>
        <dbReference type="ChEBI" id="CHEBI:30616"/>
        <dbReference type="ChEBI" id="CHEBI:43474"/>
        <dbReference type="ChEBI" id="CHEBI:58228"/>
        <dbReference type="ChEBI" id="CHEBI:58359"/>
        <dbReference type="ChEBI" id="CHEBI:456216"/>
        <dbReference type="EC" id="6.3.5.5"/>
    </reaction>
</comment>
<comment type="catalytic activity">
    <molecule>Carbamoyl phosphate synthase large chain</molecule>
    <reaction evidence="1">
        <text>hydrogencarbonate + NH4(+) + 2 ATP = carbamoyl phosphate + 2 ADP + phosphate + 2 H(+)</text>
        <dbReference type="Rhea" id="RHEA:18029"/>
        <dbReference type="ChEBI" id="CHEBI:15378"/>
        <dbReference type="ChEBI" id="CHEBI:17544"/>
        <dbReference type="ChEBI" id="CHEBI:28938"/>
        <dbReference type="ChEBI" id="CHEBI:30616"/>
        <dbReference type="ChEBI" id="CHEBI:43474"/>
        <dbReference type="ChEBI" id="CHEBI:58228"/>
        <dbReference type="ChEBI" id="CHEBI:456216"/>
        <dbReference type="EC" id="6.3.4.16"/>
    </reaction>
</comment>
<comment type="cofactor">
    <cofactor evidence="1">
        <name>Mg(2+)</name>
        <dbReference type="ChEBI" id="CHEBI:18420"/>
    </cofactor>
    <cofactor evidence="1">
        <name>Mn(2+)</name>
        <dbReference type="ChEBI" id="CHEBI:29035"/>
    </cofactor>
    <text evidence="1">Binds 4 Mg(2+) or Mn(2+) ions per subunit.</text>
</comment>
<comment type="pathway">
    <text evidence="1">Amino-acid biosynthesis; L-arginine biosynthesis; carbamoyl phosphate from bicarbonate: step 1/1.</text>
</comment>
<comment type="pathway">
    <text evidence="1">Pyrimidine metabolism; UMP biosynthesis via de novo pathway; (S)-dihydroorotate from bicarbonate: step 1/3.</text>
</comment>
<comment type="subunit">
    <text evidence="1">Composed of two chains; the small (or glutamine) chain promotes the hydrolysis of glutamine to ammonia, which is used by the large (or ammonia) chain to synthesize carbamoyl phosphate. Tetramer of heterodimers (alpha,beta)4.</text>
</comment>
<comment type="domain">
    <text evidence="1">The large subunit is composed of 2 ATP-grasp domains that are involved in binding the 2 ATP molecules needed for carbamoyl phosphate synthesis. The N-terminal ATP-grasp domain (referred to as the carboxyphosphate synthetic component) catalyzes the ATP-dependent phosphorylation of hydrogencarbonate to carboxyphosphate and the subsequent nucleophilic attack by ammonia to form a carbamate intermediate. The C-terminal ATP-grasp domain (referred to as the carbamoyl phosphate synthetic component) then catalyzes the phosphorylation of carbamate with the second ATP to form the end product carbamoyl phosphate. The reactive and unstable enzyme intermediates are sequentially channeled from one active site to the next through the interior of the protein over a distance of at least 96 A.</text>
</comment>
<comment type="similarity">
    <text evidence="1">Belongs to the CarB family.</text>
</comment>
<organism>
    <name type="scientific">Clostridium botulinum (strain Langeland / NCTC 10281 / Type F)</name>
    <dbReference type="NCBI Taxonomy" id="441772"/>
    <lineage>
        <taxon>Bacteria</taxon>
        <taxon>Bacillati</taxon>
        <taxon>Bacillota</taxon>
        <taxon>Clostridia</taxon>
        <taxon>Eubacteriales</taxon>
        <taxon>Clostridiaceae</taxon>
        <taxon>Clostridium</taxon>
    </lineage>
</organism>
<sequence>MPLNKDIKKVLVIGSGPIVIGQAAEFDYSGTQACEGLKEEGVEVVLINSNPATIMTDKKVADKVYLEPLTVEFVEKVIAKERPDSLLAGMGGQTGLNLAVELYDKGILKKYGVNVIGTSIESIKEGEDRELFRNVMSRINEPVIQSEIVTDMEDGKDFANKIGYPIIVRPAYTLGGTGGGIAESEEELDEILALGLQLSSIGQVLLEKSVKGWKEIEYEVMRDSRGNCITVCNMENIDPVGIHTGDSIVVAPSQTLSDKEYQMLRSASINILNSIGIKGGCNVQFALNPNSFEYAVIEINPRVSRSSALASKATGYPIAKVASKIALGYTLDEIKNAVTEKTYACFEPSLDYVVVKIPKWPFDKFQGADRVLGTKMMATGEIMAIGSNFEAAFLKGTRSLEIGKYSLEHKKFRELSIEELKTRVISPDDERIFALAEMLRRDYRMDKVAEITGIDKFFIKKFRWIVEEEQRLRLSKIDDLDKEWLYKLKKKGFSDKGIADMLKVSPEDIYRLRNIWRINPIYKMVDTCGGEFEALSPYYYSTYDVYDEVEVSKNKKVIVIGSGPIRIGQGIEFDYASVHCVKALKKLGIETIIVNNNPETVSTDFDVSDKLYFEPLTEEDVLNIVEKEKPDGVILQFGGQTAIKLANFLKEKNIPTLGTTADQIDMAEDREKFDELLEKLKIARPKGKGIWSVEDGLEEAKKLGFPVLVRPSYVLGGQGMEITHDEKELVYYLSNAFQKDKKNPILIDKYLMGREIEVDAISDGEDVLIPGIMEHLERAGVHSGDSITMYPTQNVSKDIKEKILEYTKKLALGIGIKGMINIQFIEFQGNLYVIEVNPRASRTVPYISKVSKVPIVDIATRVMLGEKLNDLGYGVGVYKEPELISVKVPVFSTQKLPRVEVCLGPEMKSTGEVLGVGKTLDEALYKGFIGANISIKKEKGTVLATINDHDKEEFLPIAKKLHSLGYKFIATSKTAELLKEEGIEVKQVRKLKEESPNIIDTIKNDEVDLVVNTPTKGNDSKRDGFHIRRAAIERNLGVITSLDTLKAIVDIKFKEIKDETLYIFDLSN</sequence>
<dbReference type="EC" id="6.3.4.16" evidence="1"/>
<dbReference type="EC" id="6.3.5.5" evidence="1"/>
<dbReference type="EMBL" id="CP000728">
    <property type="protein sequence ID" value="ABS41907.1"/>
    <property type="molecule type" value="Genomic_DNA"/>
</dbReference>
<dbReference type="RefSeq" id="WP_012099823.1">
    <property type="nucleotide sequence ID" value="NC_009699.1"/>
</dbReference>
<dbReference type="SMR" id="A7GE89"/>
<dbReference type="KEGG" id="cbf:CLI_1839"/>
<dbReference type="HOGENOM" id="CLU_000513_1_2_9"/>
<dbReference type="UniPathway" id="UPA00068">
    <property type="reaction ID" value="UER00171"/>
</dbReference>
<dbReference type="UniPathway" id="UPA00070">
    <property type="reaction ID" value="UER00115"/>
</dbReference>
<dbReference type="Proteomes" id="UP000002410">
    <property type="component" value="Chromosome"/>
</dbReference>
<dbReference type="GO" id="GO:0005737">
    <property type="term" value="C:cytoplasm"/>
    <property type="evidence" value="ECO:0007669"/>
    <property type="project" value="TreeGrafter"/>
</dbReference>
<dbReference type="GO" id="GO:0005524">
    <property type="term" value="F:ATP binding"/>
    <property type="evidence" value="ECO:0007669"/>
    <property type="project" value="UniProtKB-UniRule"/>
</dbReference>
<dbReference type="GO" id="GO:0004087">
    <property type="term" value="F:carbamoyl-phosphate synthase (ammonia) activity"/>
    <property type="evidence" value="ECO:0007669"/>
    <property type="project" value="RHEA"/>
</dbReference>
<dbReference type="GO" id="GO:0004088">
    <property type="term" value="F:carbamoyl-phosphate synthase (glutamine-hydrolyzing) activity"/>
    <property type="evidence" value="ECO:0007669"/>
    <property type="project" value="UniProtKB-UniRule"/>
</dbReference>
<dbReference type="GO" id="GO:0046872">
    <property type="term" value="F:metal ion binding"/>
    <property type="evidence" value="ECO:0007669"/>
    <property type="project" value="UniProtKB-KW"/>
</dbReference>
<dbReference type="GO" id="GO:0044205">
    <property type="term" value="P:'de novo' UMP biosynthetic process"/>
    <property type="evidence" value="ECO:0007669"/>
    <property type="project" value="UniProtKB-UniRule"/>
</dbReference>
<dbReference type="GO" id="GO:0006541">
    <property type="term" value="P:glutamine metabolic process"/>
    <property type="evidence" value="ECO:0007669"/>
    <property type="project" value="TreeGrafter"/>
</dbReference>
<dbReference type="GO" id="GO:0006526">
    <property type="term" value="P:L-arginine biosynthetic process"/>
    <property type="evidence" value="ECO:0007669"/>
    <property type="project" value="UniProtKB-UniRule"/>
</dbReference>
<dbReference type="CDD" id="cd01424">
    <property type="entry name" value="MGS_CPS_II"/>
    <property type="match status" value="1"/>
</dbReference>
<dbReference type="FunFam" id="1.10.1030.10:FF:000002">
    <property type="entry name" value="Carbamoyl-phosphate synthase large chain"/>
    <property type="match status" value="1"/>
</dbReference>
<dbReference type="FunFam" id="3.30.470.20:FF:000001">
    <property type="entry name" value="Carbamoyl-phosphate synthase large chain"/>
    <property type="match status" value="1"/>
</dbReference>
<dbReference type="FunFam" id="3.30.470.20:FF:000026">
    <property type="entry name" value="Carbamoyl-phosphate synthase large chain"/>
    <property type="match status" value="1"/>
</dbReference>
<dbReference type="FunFam" id="3.40.50.20:FF:000001">
    <property type="entry name" value="Carbamoyl-phosphate synthase large chain"/>
    <property type="match status" value="1"/>
</dbReference>
<dbReference type="FunFam" id="3.40.50.20:FF:000002">
    <property type="entry name" value="Carbamoyl-phosphate synthase large chain"/>
    <property type="match status" value="1"/>
</dbReference>
<dbReference type="Gene3D" id="3.40.50.20">
    <property type="match status" value="2"/>
</dbReference>
<dbReference type="Gene3D" id="3.30.1490.20">
    <property type="entry name" value="ATP-grasp fold, A domain"/>
    <property type="match status" value="1"/>
</dbReference>
<dbReference type="Gene3D" id="3.30.470.20">
    <property type="entry name" value="ATP-grasp fold, B domain"/>
    <property type="match status" value="2"/>
</dbReference>
<dbReference type="Gene3D" id="1.10.1030.10">
    <property type="entry name" value="Carbamoyl-phosphate synthetase, large subunit oligomerisation domain"/>
    <property type="match status" value="1"/>
</dbReference>
<dbReference type="Gene3D" id="3.40.50.1380">
    <property type="entry name" value="Methylglyoxal synthase-like domain"/>
    <property type="match status" value="1"/>
</dbReference>
<dbReference type="HAMAP" id="MF_01210_A">
    <property type="entry name" value="CPSase_L_chain_A"/>
    <property type="match status" value="1"/>
</dbReference>
<dbReference type="HAMAP" id="MF_01210_B">
    <property type="entry name" value="CPSase_L_chain_B"/>
    <property type="match status" value="1"/>
</dbReference>
<dbReference type="InterPro" id="IPR011761">
    <property type="entry name" value="ATP-grasp"/>
</dbReference>
<dbReference type="InterPro" id="IPR013815">
    <property type="entry name" value="ATP_grasp_subdomain_1"/>
</dbReference>
<dbReference type="InterPro" id="IPR006275">
    <property type="entry name" value="CarbamoylP_synth_lsu"/>
</dbReference>
<dbReference type="InterPro" id="IPR005480">
    <property type="entry name" value="CarbamoylP_synth_lsu_oligo"/>
</dbReference>
<dbReference type="InterPro" id="IPR036897">
    <property type="entry name" value="CarbamoylP_synth_lsu_oligo_sf"/>
</dbReference>
<dbReference type="InterPro" id="IPR005479">
    <property type="entry name" value="CbamoylP_synth_lsu-like_ATP-bd"/>
</dbReference>
<dbReference type="InterPro" id="IPR005483">
    <property type="entry name" value="CbamoylP_synth_lsu_CPSase_dom"/>
</dbReference>
<dbReference type="InterPro" id="IPR011607">
    <property type="entry name" value="MGS-like_dom"/>
</dbReference>
<dbReference type="InterPro" id="IPR036914">
    <property type="entry name" value="MGS-like_dom_sf"/>
</dbReference>
<dbReference type="InterPro" id="IPR033937">
    <property type="entry name" value="MGS_CPS_CarB"/>
</dbReference>
<dbReference type="InterPro" id="IPR016185">
    <property type="entry name" value="PreATP-grasp_dom_sf"/>
</dbReference>
<dbReference type="NCBIfam" id="TIGR01369">
    <property type="entry name" value="CPSaseII_lrg"/>
    <property type="match status" value="1"/>
</dbReference>
<dbReference type="NCBIfam" id="NF003671">
    <property type="entry name" value="PRK05294.1"/>
    <property type="match status" value="1"/>
</dbReference>
<dbReference type="NCBIfam" id="NF009455">
    <property type="entry name" value="PRK12815.1"/>
    <property type="match status" value="1"/>
</dbReference>
<dbReference type="PANTHER" id="PTHR11405:SF53">
    <property type="entry name" value="CARBAMOYL-PHOSPHATE SYNTHASE [AMMONIA], MITOCHONDRIAL"/>
    <property type="match status" value="1"/>
</dbReference>
<dbReference type="PANTHER" id="PTHR11405">
    <property type="entry name" value="CARBAMOYLTRANSFERASE FAMILY MEMBER"/>
    <property type="match status" value="1"/>
</dbReference>
<dbReference type="Pfam" id="PF02786">
    <property type="entry name" value="CPSase_L_D2"/>
    <property type="match status" value="2"/>
</dbReference>
<dbReference type="Pfam" id="PF02787">
    <property type="entry name" value="CPSase_L_D3"/>
    <property type="match status" value="1"/>
</dbReference>
<dbReference type="Pfam" id="PF02142">
    <property type="entry name" value="MGS"/>
    <property type="match status" value="1"/>
</dbReference>
<dbReference type="PRINTS" id="PR00098">
    <property type="entry name" value="CPSASE"/>
</dbReference>
<dbReference type="SMART" id="SM01096">
    <property type="entry name" value="CPSase_L_D3"/>
    <property type="match status" value="1"/>
</dbReference>
<dbReference type="SMART" id="SM00851">
    <property type="entry name" value="MGS"/>
    <property type="match status" value="1"/>
</dbReference>
<dbReference type="SUPFAM" id="SSF48108">
    <property type="entry name" value="Carbamoyl phosphate synthetase, large subunit connection domain"/>
    <property type="match status" value="1"/>
</dbReference>
<dbReference type="SUPFAM" id="SSF56059">
    <property type="entry name" value="Glutathione synthetase ATP-binding domain-like"/>
    <property type="match status" value="2"/>
</dbReference>
<dbReference type="SUPFAM" id="SSF52335">
    <property type="entry name" value="Methylglyoxal synthase-like"/>
    <property type="match status" value="1"/>
</dbReference>
<dbReference type="SUPFAM" id="SSF52440">
    <property type="entry name" value="PreATP-grasp domain"/>
    <property type="match status" value="2"/>
</dbReference>
<dbReference type="PROSITE" id="PS50975">
    <property type="entry name" value="ATP_GRASP"/>
    <property type="match status" value="2"/>
</dbReference>
<dbReference type="PROSITE" id="PS00866">
    <property type="entry name" value="CPSASE_1"/>
    <property type="match status" value="2"/>
</dbReference>
<dbReference type="PROSITE" id="PS00867">
    <property type="entry name" value="CPSASE_2"/>
    <property type="match status" value="2"/>
</dbReference>
<dbReference type="PROSITE" id="PS51855">
    <property type="entry name" value="MGS"/>
    <property type="match status" value="1"/>
</dbReference>
<reference key="1">
    <citation type="submission" date="2007-06" db="EMBL/GenBank/DDBJ databases">
        <authorList>
            <person name="Brinkac L.M."/>
            <person name="Daugherty S."/>
            <person name="Dodson R.J."/>
            <person name="Madupu R."/>
            <person name="Brown J.L."/>
            <person name="Bruce D."/>
            <person name="Detter C."/>
            <person name="Munk C."/>
            <person name="Smith L.A."/>
            <person name="Smith T.J."/>
            <person name="White O."/>
            <person name="Brettin T.S."/>
        </authorList>
    </citation>
    <scope>NUCLEOTIDE SEQUENCE [LARGE SCALE GENOMIC DNA]</scope>
    <source>
        <strain>Langeland / NCTC 10281 / Type F</strain>
    </source>
</reference>
<evidence type="ECO:0000255" key="1">
    <source>
        <dbReference type="HAMAP-Rule" id="MF_01210"/>
    </source>
</evidence>
<protein>
    <recommendedName>
        <fullName evidence="1">Carbamoyl phosphate synthase large chain</fullName>
        <ecNumber evidence="1">6.3.4.16</ecNumber>
        <ecNumber evidence="1">6.3.5.5</ecNumber>
    </recommendedName>
    <alternativeName>
        <fullName evidence="1">Carbamoyl phosphate synthetase ammonia chain</fullName>
    </alternativeName>
</protein>
<keyword id="KW-0028">Amino-acid biosynthesis</keyword>
<keyword id="KW-0055">Arginine biosynthesis</keyword>
<keyword id="KW-0067">ATP-binding</keyword>
<keyword id="KW-0436">Ligase</keyword>
<keyword id="KW-0460">Magnesium</keyword>
<keyword id="KW-0464">Manganese</keyword>
<keyword id="KW-0479">Metal-binding</keyword>
<keyword id="KW-0547">Nucleotide-binding</keyword>
<keyword id="KW-0665">Pyrimidine biosynthesis</keyword>
<keyword id="KW-0677">Repeat</keyword>
<gene>
    <name evidence="1" type="primary">carB</name>
    <name type="ordered locus">CLI_1839</name>
</gene>
<feature type="chain" id="PRO_1000066345" description="Carbamoyl phosphate synthase large chain">
    <location>
        <begin position="1"/>
        <end position="1068"/>
    </location>
</feature>
<feature type="domain" description="ATP-grasp 1" evidence="1">
    <location>
        <begin position="133"/>
        <end position="327"/>
    </location>
</feature>
<feature type="domain" description="ATP-grasp 2" evidence="1">
    <location>
        <begin position="674"/>
        <end position="864"/>
    </location>
</feature>
<feature type="domain" description="MGS-like" evidence="1">
    <location>
        <begin position="933"/>
        <end position="1068"/>
    </location>
</feature>
<feature type="region of interest" description="Carboxyphosphate synthetic domain" evidence="1">
    <location>
        <begin position="1"/>
        <end position="401"/>
    </location>
</feature>
<feature type="region of interest" description="Oligomerization domain" evidence="1">
    <location>
        <begin position="402"/>
        <end position="549"/>
    </location>
</feature>
<feature type="region of interest" description="Carbamoyl phosphate synthetic domain" evidence="1">
    <location>
        <begin position="550"/>
        <end position="932"/>
    </location>
</feature>
<feature type="region of interest" description="Allosteric domain" evidence="1">
    <location>
        <begin position="933"/>
        <end position="1068"/>
    </location>
</feature>
<feature type="binding site" evidence="1">
    <location>
        <position position="129"/>
    </location>
    <ligand>
        <name>ATP</name>
        <dbReference type="ChEBI" id="CHEBI:30616"/>
        <label>1</label>
    </ligand>
</feature>
<feature type="binding site" evidence="1">
    <location>
        <position position="169"/>
    </location>
    <ligand>
        <name>ATP</name>
        <dbReference type="ChEBI" id="CHEBI:30616"/>
        <label>1</label>
    </ligand>
</feature>
<feature type="binding site" evidence="1">
    <location>
        <position position="175"/>
    </location>
    <ligand>
        <name>ATP</name>
        <dbReference type="ChEBI" id="CHEBI:30616"/>
        <label>1</label>
    </ligand>
</feature>
<feature type="binding site" evidence="1">
    <location>
        <position position="176"/>
    </location>
    <ligand>
        <name>ATP</name>
        <dbReference type="ChEBI" id="CHEBI:30616"/>
        <label>1</label>
    </ligand>
</feature>
<feature type="binding site" evidence="1">
    <location>
        <position position="208"/>
    </location>
    <ligand>
        <name>ATP</name>
        <dbReference type="ChEBI" id="CHEBI:30616"/>
        <label>1</label>
    </ligand>
</feature>
<feature type="binding site" evidence="1">
    <location>
        <position position="210"/>
    </location>
    <ligand>
        <name>ATP</name>
        <dbReference type="ChEBI" id="CHEBI:30616"/>
        <label>1</label>
    </ligand>
</feature>
<feature type="binding site" evidence="1">
    <location>
        <position position="215"/>
    </location>
    <ligand>
        <name>ATP</name>
        <dbReference type="ChEBI" id="CHEBI:30616"/>
        <label>1</label>
    </ligand>
</feature>
<feature type="binding site" evidence="1">
    <location>
        <position position="241"/>
    </location>
    <ligand>
        <name>ATP</name>
        <dbReference type="ChEBI" id="CHEBI:30616"/>
        <label>1</label>
    </ligand>
</feature>
<feature type="binding site" evidence="1">
    <location>
        <position position="242"/>
    </location>
    <ligand>
        <name>ATP</name>
        <dbReference type="ChEBI" id="CHEBI:30616"/>
        <label>1</label>
    </ligand>
</feature>
<feature type="binding site" evidence="1">
    <location>
        <position position="243"/>
    </location>
    <ligand>
        <name>ATP</name>
        <dbReference type="ChEBI" id="CHEBI:30616"/>
        <label>1</label>
    </ligand>
</feature>
<feature type="binding site" evidence="1">
    <location>
        <position position="284"/>
    </location>
    <ligand>
        <name>ATP</name>
        <dbReference type="ChEBI" id="CHEBI:30616"/>
        <label>1</label>
    </ligand>
</feature>
<feature type="binding site" evidence="1">
    <location>
        <position position="284"/>
    </location>
    <ligand>
        <name>Mg(2+)</name>
        <dbReference type="ChEBI" id="CHEBI:18420"/>
        <label>1</label>
    </ligand>
</feature>
<feature type="binding site" evidence="1">
    <location>
        <position position="284"/>
    </location>
    <ligand>
        <name>Mn(2+)</name>
        <dbReference type="ChEBI" id="CHEBI:29035"/>
        <label>1</label>
    </ligand>
</feature>
<feature type="binding site" evidence="1">
    <location>
        <position position="298"/>
    </location>
    <ligand>
        <name>ATP</name>
        <dbReference type="ChEBI" id="CHEBI:30616"/>
        <label>1</label>
    </ligand>
</feature>
<feature type="binding site" evidence="1">
    <location>
        <position position="298"/>
    </location>
    <ligand>
        <name>Mg(2+)</name>
        <dbReference type="ChEBI" id="CHEBI:18420"/>
        <label>1</label>
    </ligand>
</feature>
<feature type="binding site" evidence="1">
    <location>
        <position position="298"/>
    </location>
    <ligand>
        <name>Mg(2+)</name>
        <dbReference type="ChEBI" id="CHEBI:18420"/>
        <label>2</label>
    </ligand>
</feature>
<feature type="binding site" evidence="1">
    <location>
        <position position="298"/>
    </location>
    <ligand>
        <name>Mn(2+)</name>
        <dbReference type="ChEBI" id="CHEBI:29035"/>
        <label>1</label>
    </ligand>
</feature>
<feature type="binding site" evidence="1">
    <location>
        <position position="298"/>
    </location>
    <ligand>
        <name>Mn(2+)</name>
        <dbReference type="ChEBI" id="CHEBI:29035"/>
        <label>2</label>
    </ligand>
</feature>
<feature type="binding site" evidence="1">
    <location>
        <position position="300"/>
    </location>
    <ligand>
        <name>Mg(2+)</name>
        <dbReference type="ChEBI" id="CHEBI:18420"/>
        <label>2</label>
    </ligand>
</feature>
<feature type="binding site" evidence="1">
    <location>
        <position position="300"/>
    </location>
    <ligand>
        <name>Mn(2+)</name>
        <dbReference type="ChEBI" id="CHEBI:29035"/>
        <label>2</label>
    </ligand>
</feature>
<feature type="binding site" evidence="1">
    <location>
        <position position="710"/>
    </location>
    <ligand>
        <name>ATP</name>
        <dbReference type="ChEBI" id="CHEBI:30616"/>
        <label>2</label>
    </ligand>
</feature>
<feature type="binding site" evidence="1">
    <location>
        <position position="749"/>
    </location>
    <ligand>
        <name>ATP</name>
        <dbReference type="ChEBI" id="CHEBI:30616"/>
        <label>2</label>
    </ligand>
</feature>
<feature type="binding site" evidence="1">
    <location>
        <position position="751"/>
    </location>
    <ligand>
        <name>ATP</name>
        <dbReference type="ChEBI" id="CHEBI:30616"/>
        <label>2</label>
    </ligand>
</feature>
<feature type="binding site" evidence="1">
    <location>
        <position position="755"/>
    </location>
    <ligand>
        <name>ATP</name>
        <dbReference type="ChEBI" id="CHEBI:30616"/>
        <label>2</label>
    </ligand>
</feature>
<feature type="binding site" evidence="1">
    <location>
        <position position="780"/>
    </location>
    <ligand>
        <name>ATP</name>
        <dbReference type="ChEBI" id="CHEBI:30616"/>
        <label>2</label>
    </ligand>
</feature>
<feature type="binding site" evidence="1">
    <location>
        <position position="781"/>
    </location>
    <ligand>
        <name>ATP</name>
        <dbReference type="ChEBI" id="CHEBI:30616"/>
        <label>2</label>
    </ligand>
</feature>
<feature type="binding site" evidence="1">
    <location>
        <position position="782"/>
    </location>
    <ligand>
        <name>ATP</name>
        <dbReference type="ChEBI" id="CHEBI:30616"/>
        <label>2</label>
    </ligand>
</feature>
<feature type="binding site" evidence="1">
    <location>
        <position position="783"/>
    </location>
    <ligand>
        <name>ATP</name>
        <dbReference type="ChEBI" id="CHEBI:30616"/>
        <label>2</label>
    </ligand>
</feature>
<feature type="binding site" evidence="1">
    <location>
        <position position="823"/>
    </location>
    <ligand>
        <name>ATP</name>
        <dbReference type="ChEBI" id="CHEBI:30616"/>
        <label>2</label>
    </ligand>
</feature>
<feature type="binding site" evidence="1">
    <location>
        <position position="823"/>
    </location>
    <ligand>
        <name>Mg(2+)</name>
        <dbReference type="ChEBI" id="CHEBI:18420"/>
        <label>3</label>
    </ligand>
</feature>
<feature type="binding site" evidence="1">
    <location>
        <position position="823"/>
    </location>
    <ligand>
        <name>Mn(2+)</name>
        <dbReference type="ChEBI" id="CHEBI:29035"/>
        <label>3</label>
    </ligand>
</feature>
<feature type="binding site" evidence="1">
    <location>
        <position position="835"/>
    </location>
    <ligand>
        <name>ATP</name>
        <dbReference type="ChEBI" id="CHEBI:30616"/>
        <label>2</label>
    </ligand>
</feature>
<feature type="binding site" evidence="1">
    <location>
        <position position="835"/>
    </location>
    <ligand>
        <name>Mg(2+)</name>
        <dbReference type="ChEBI" id="CHEBI:18420"/>
        <label>3</label>
    </ligand>
</feature>
<feature type="binding site" evidence="1">
    <location>
        <position position="835"/>
    </location>
    <ligand>
        <name>Mg(2+)</name>
        <dbReference type="ChEBI" id="CHEBI:18420"/>
        <label>4</label>
    </ligand>
</feature>
<feature type="binding site" evidence="1">
    <location>
        <position position="835"/>
    </location>
    <ligand>
        <name>Mn(2+)</name>
        <dbReference type="ChEBI" id="CHEBI:29035"/>
        <label>3</label>
    </ligand>
</feature>
<feature type="binding site" evidence="1">
    <location>
        <position position="835"/>
    </location>
    <ligand>
        <name>Mn(2+)</name>
        <dbReference type="ChEBI" id="CHEBI:29035"/>
        <label>4</label>
    </ligand>
</feature>
<feature type="binding site" evidence="1">
    <location>
        <position position="837"/>
    </location>
    <ligand>
        <name>Mg(2+)</name>
        <dbReference type="ChEBI" id="CHEBI:18420"/>
        <label>4</label>
    </ligand>
</feature>
<feature type="binding site" evidence="1">
    <location>
        <position position="837"/>
    </location>
    <ligand>
        <name>Mn(2+)</name>
        <dbReference type="ChEBI" id="CHEBI:29035"/>
        <label>4</label>
    </ligand>
</feature>
<proteinExistence type="inferred from homology"/>